<organism>
    <name type="scientific">Porcine transmissible gastroenteritis coronavirus (strain Purdue)</name>
    <name type="common">TGEV</name>
    <dbReference type="NCBI Taxonomy" id="11151"/>
    <lineage>
        <taxon>Viruses</taxon>
        <taxon>Riboviria</taxon>
        <taxon>Orthornavirae</taxon>
        <taxon>Pisuviricota</taxon>
        <taxon>Pisoniviricetes</taxon>
        <taxon>Nidovirales</taxon>
        <taxon>Cornidovirineae</taxon>
        <taxon>Coronaviridae</taxon>
        <taxon>Orthocoronavirinae</taxon>
        <taxon>Alphacoronavirus</taxon>
        <taxon>Tegacovirus</taxon>
        <taxon>Alphacoronavirus 1</taxon>
    </lineage>
</organism>
<accession>P09047</accession>
<accession>Q85086</accession>
<protein>
    <recommendedName>
        <fullName>Putative non-structural protein 3b</fullName>
        <shortName>ns3b</shortName>
    </recommendedName>
    <alternativeName>
        <fullName>Accessory protein 3b</fullName>
    </alternativeName>
    <alternativeName>
        <fullName>Non-structural protein 3-1</fullName>
    </alternativeName>
    <alternativeName>
        <fullName>X2b protein</fullName>
    </alternativeName>
</protein>
<proteinExistence type="uncertain"/>
<organismHost>
    <name type="scientific">Sus scrofa</name>
    <name type="common">Pig</name>
    <dbReference type="NCBI Taxonomy" id="9823"/>
</organismHost>
<name>NS3B_CVPPU</name>
<reference key="1">
    <citation type="journal article" date="1987" name="Biochimie">
        <title>Enteric coronavirus TGEV: partial sequence of the genomic RNA, its organization and expression.</title>
        <authorList>
            <person name="Rasschaert D."/>
            <person name="Gelfi J."/>
            <person name="Laude H."/>
        </authorList>
    </citation>
    <scope>NUCLEOTIDE SEQUENCE [GENOMIC RNA]</scope>
</reference>
<reference key="2">
    <citation type="journal article" date="1989" name="Virus Genes">
        <title>Nucleotide sequence between the peplomer and matrix protein genes of the porcine transmissible gastroenteritis coronavirus identifies three large open reading frames.</title>
        <authorList>
            <person name="Kapke P.A."/>
            <person name="Tung F.Y."/>
            <person name="Brian D.A."/>
        </authorList>
    </citation>
    <scope>NUCLEOTIDE SEQUENCE [GENOMIC RNA]</scope>
</reference>
<reference key="3">
    <citation type="journal article" date="1989" name="Virus Res.">
        <title>Nucleotide sequence of coronavirus TGEV genomic RNA: evidence for 3 mRNA species between the peplomer and matrix protein genes.</title>
        <authorList>
            <person name="Wesley R.D."/>
            <person name="Cheung A.K."/>
            <person name="Michael D.D."/>
            <person name="Woods R.D."/>
        </authorList>
    </citation>
    <scope>NUCLEOTIDE SEQUENCE [GENOMIC RNA]</scope>
</reference>
<reference key="4">
    <citation type="journal article" date="2000" name="Proc. Natl. Acad. Sci. U.S.A.">
        <title>Engineering the largest RNA virus genome as an infectious bacterial artificial chromosome.</title>
        <authorList>
            <person name="Almazan F."/>
            <person name="Gonzalez J.M."/>
            <person name="Penzes Z."/>
            <person name="Izeta A."/>
            <person name="Calvo E."/>
            <person name="Plana-Duran J."/>
            <person name="Enjuanes L."/>
        </authorList>
    </citation>
    <scope>NUCLEOTIDE SEQUENCE [GENOMIC RNA]</scope>
    <source>
        <strain>Isolate PUR46-MAD</strain>
    </source>
</reference>
<feature type="chain" id="PRO_0000106075" description="Putative non-structural protein 3b">
    <location>
        <begin position="1"/>
        <end position="244"/>
    </location>
</feature>
<feature type="transmembrane region" description="Helical" evidence="1">
    <location>
        <begin position="47"/>
        <end position="67"/>
    </location>
</feature>
<feature type="transmembrane region" description="Helical" evidence="1">
    <location>
        <begin position="75"/>
        <end position="95"/>
    </location>
</feature>
<feature type="transmembrane region" description="Helical" evidence="1">
    <location>
        <begin position="102"/>
        <end position="122"/>
    </location>
</feature>
<feature type="domain" description="CoV 3a-like viroporin TM" evidence="2">
    <location>
        <begin position="41"/>
        <end position="131"/>
    </location>
</feature>
<feature type="domain" description="CoV 3a-like viroporin CD" evidence="3">
    <location>
        <begin position="135"/>
        <end position="214"/>
    </location>
</feature>
<feature type="sequence conflict" description="In Ref. 3." evidence="4" ref="3">
    <original>S</original>
    <variation>N</variation>
    <location>
        <position position="8"/>
    </location>
</feature>
<feature type="sequence conflict" description="In Ref. 3." evidence="4" ref="3">
    <original>Q</original>
    <variation>K</variation>
    <location>
        <position position="31"/>
    </location>
</feature>
<feature type="sequence conflict" description="In Ref. 4." evidence="4" ref="4">
    <original>Q</original>
    <variation>H</variation>
    <location>
        <position position="41"/>
    </location>
</feature>
<feature type="sequence conflict" description="In Ref. 2; CAA31287." evidence="4" ref="2">
    <original>L</original>
    <variation>P</variation>
    <location>
        <position position="59"/>
    </location>
</feature>
<feature type="sequence conflict" description="In Ref. 3." evidence="4" ref="3">
    <original>V</original>
    <variation>A</variation>
    <location>
        <position position="114"/>
    </location>
</feature>
<feature type="sequence conflict" description="In Ref. 3." evidence="4" ref="3">
    <original>M</original>
    <variation>K</variation>
    <location>
        <position position="147"/>
    </location>
</feature>
<feature type="sequence conflict" description="In Ref. 3." evidence="4" ref="3">
    <original>H</original>
    <variation>R</variation>
    <location>
        <position position="239"/>
    </location>
</feature>
<gene>
    <name type="ORF">3b</name>
</gene>
<dbReference type="EMBL" id="X06371">
    <property type="protein sequence ID" value="CAA29671.1"/>
    <property type="status" value="ALT_INIT"/>
    <property type="molecule type" value="Genomic_RNA"/>
</dbReference>
<dbReference type="EMBL" id="X12800">
    <property type="protein sequence ID" value="CAA31287.1"/>
    <property type="molecule type" value="Genomic_DNA"/>
</dbReference>
<dbReference type="EMBL" id="AJ271965">
    <property type="status" value="NOT_ANNOTATED_CDS"/>
    <property type="molecule type" value="Genomic_RNA"/>
</dbReference>
<dbReference type="PIR" id="S01740">
    <property type="entry name" value="S01740"/>
</dbReference>
<dbReference type="PIR" id="S04890">
    <property type="entry name" value="S04890"/>
</dbReference>
<dbReference type="Proteomes" id="UP000001440">
    <property type="component" value="Segment"/>
</dbReference>
<dbReference type="GO" id="GO:0033644">
    <property type="term" value="C:host cell membrane"/>
    <property type="evidence" value="ECO:0007669"/>
    <property type="project" value="UniProtKB-SubCell"/>
</dbReference>
<dbReference type="GO" id="GO:0016020">
    <property type="term" value="C:membrane"/>
    <property type="evidence" value="ECO:0007669"/>
    <property type="project" value="UniProtKB-KW"/>
</dbReference>
<dbReference type="InterPro" id="IPR046446">
    <property type="entry name" value="a/bCoV_VIROPORIN_3A-like_CD"/>
</dbReference>
<dbReference type="InterPro" id="IPR046445">
    <property type="entry name" value="a/bCoV_VIROPORIN_3A-like_TM"/>
</dbReference>
<dbReference type="InterPro" id="IPR004293">
    <property type="entry name" value="Coronavirus_Orf3a/b"/>
</dbReference>
<dbReference type="Pfam" id="PF03053">
    <property type="entry name" value="Corona_NS3b"/>
    <property type="match status" value="1"/>
</dbReference>
<dbReference type="PROSITE" id="PS51967">
    <property type="entry name" value="COV_VIROPORIN_3A_CD"/>
    <property type="match status" value="1"/>
</dbReference>
<dbReference type="PROSITE" id="PS51966">
    <property type="entry name" value="COV_VIROPORIN_3A_TM"/>
    <property type="match status" value="1"/>
</dbReference>
<keyword id="KW-1043">Host membrane</keyword>
<keyword id="KW-0472">Membrane</keyword>
<keyword id="KW-1185">Reference proteome</keyword>
<keyword id="KW-0812">Transmembrane</keyword>
<keyword id="KW-1133">Transmembrane helix</keyword>
<evidence type="ECO:0000255" key="1"/>
<evidence type="ECO:0000255" key="2">
    <source>
        <dbReference type="PROSITE-ProRule" id="PRU01311"/>
    </source>
</evidence>
<evidence type="ECO:0000255" key="3">
    <source>
        <dbReference type="PROSITE-ProRule" id="PRU01312"/>
    </source>
</evidence>
<evidence type="ECO:0000305" key="4"/>
<comment type="subcellular location">
    <subcellularLocation>
        <location evidence="4">Host membrane</location>
        <topology evidence="4">Multi-pass membrane protein</topology>
    </subcellularLocation>
</comment>
<comment type="similarity">
    <text evidence="4">Belongs to the coronaviruses NS3b protein family.</text>
</comment>
<comment type="caution">
    <text evidence="4">Could be the product of a pseudogene.</text>
</comment>
<comment type="sequence caution" evidence="4">
    <conflict type="erroneous initiation">
        <sequence resource="EMBL-CDS" id="CAA29671"/>
    </conflict>
</comment>
<sequence length="244" mass="27724">MIGGLFLSTLSFVIVSNHSIVNNTANVHHIQQERVIVQQHQVVSARTQNYYPEFSIAVLFVSFLALYRSTNFKTCVGILMFKILSMTLLGPMLIAYGYYIDGIVTTTVLSLRFVYLAYFWYVNSRFEFILYNTTTLMFVHGRAAPFMRSSHSSIYVTLYGGINYMFVNDLTLHFVDPMLVSIAIRGLAHADLTVVRAVELLNGDFIYVFSQEPVVGVYNAAFSQAVLNEIDLKEEEEDHTYDVS</sequence>